<accession>B3DRY2</accession>
<keyword id="KW-0963">Cytoplasm</keyword>
<keyword id="KW-0328">Glycosyltransferase</keyword>
<keyword id="KW-0660">Purine salvage</keyword>
<keyword id="KW-0808">Transferase</keyword>
<dbReference type="EC" id="2.4.2.7" evidence="1"/>
<dbReference type="EMBL" id="CP000605">
    <property type="protein sequence ID" value="ACD97901.1"/>
    <property type="molecule type" value="Genomic_DNA"/>
</dbReference>
<dbReference type="RefSeq" id="WP_007052860.1">
    <property type="nucleotide sequence ID" value="NZ_AABM02000001.1"/>
</dbReference>
<dbReference type="SMR" id="B3DRY2"/>
<dbReference type="KEGG" id="blj:BLD_0455"/>
<dbReference type="HOGENOM" id="CLU_063339_3_2_11"/>
<dbReference type="UniPathway" id="UPA00588">
    <property type="reaction ID" value="UER00646"/>
</dbReference>
<dbReference type="Proteomes" id="UP000002419">
    <property type="component" value="Chromosome"/>
</dbReference>
<dbReference type="GO" id="GO:0005737">
    <property type="term" value="C:cytoplasm"/>
    <property type="evidence" value="ECO:0007669"/>
    <property type="project" value="UniProtKB-SubCell"/>
</dbReference>
<dbReference type="GO" id="GO:0002055">
    <property type="term" value="F:adenine binding"/>
    <property type="evidence" value="ECO:0007669"/>
    <property type="project" value="TreeGrafter"/>
</dbReference>
<dbReference type="GO" id="GO:0003999">
    <property type="term" value="F:adenine phosphoribosyltransferase activity"/>
    <property type="evidence" value="ECO:0007669"/>
    <property type="project" value="UniProtKB-UniRule"/>
</dbReference>
<dbReference type="GO" id="GO:0016208">
    <property type="term" value="F:AMP binding"/>
    <property type="evidence" value="ECO:0007669"/>
    <property type="project" value="TreeGrafter"/>
</dbReference>
<dbReference type="GO" id="GO:0006168">
    <property type="term" value="P:adenine salvage"/>
    <property type="evidence" value="ECO:0007669"/>
    <property type="project" value="InterPro"/>
</dbReference>
<dbReference type="GO" id="GO:0044209">
    <property type="term" value="P:AMP salvage"/>
    <property type="evidence" value="ECO:0007669"/>
    <property type="project" value="UniProtKB-UniRule"/>
</dbReference>
<dbReference type="GO" id="GO:0006166">
    <property type="term" value="P:purine ribonucleoside salvage"/>
    <property type="evidence" value="ECO:0007669"/>
    <property type="project" value="UniProtKB-KW"/>
</dbReference>
<dbReference type="CDD" id="cd06223">
    <property type="entry name" value="PRTases_typeI"/>
    <property type="match status" value="1"/>
</dbReference>
<dbReference type="FunFam" id="3.40.50.2020:FF:000021">
    <property type="entry name" value="Adenine phosphoribosyltransferase"/>
    <property type="match status" value="1"/>
</dbReference>
<dbReference type="Gene3D" id="3.40.50.2020">
    <property type="match status" value="1"/>
</dbReference>
<dbReference type="HAMAP" id="MF_00004">
    <property type="entry name" value="Aden_phosphoribosyltr"/>
    <property type="match status" value="1"/>
</dbReference>
<dbReference type="InterPro" id="IPR005764">
    <property type="entry name" value="Ade_phspho_trans"/>
</dbReference>
<dbReference type="InterPro" id="IPR000836">
    <property type="entry name" value="PRibTrfase_dom"/>
</dbReference>
<dbReference type="InterPro" id="IPR029057">
    <property type="entry name" value="PRTase-like"/>
</dbReference>
<dbReference type="InterPro" id="IPR050054">
    <property type="entry name" value="UPRTase/APRTase"/>
</dbReference>
<dbReference type="NCBIfam" id="TIGR01090">
    <property type="entry name" value="apt"/>
    <property type="match status" value="1"/>
</dbReference>
<dbReference type="NCBIfam" id="NF002634">
    <property type="entry name" value="PRK02304.1-3"/>
    <property type="match status" value="1"/>
</dbReference>
<dbReference type="NCBIfam" id="NF002636">
    <property type="entry name" value="PRK02304.1-5"/>
    <property type="match status" value="1"/>
</dbReference>
<dbReference type="PANTHER" id="PTHR32315">
    <property type="entry name" value="ADENINE PHOSPHORIBOSYLTRANSFERASE"/>
    <property type="match status" value="1"/>
</dbReference>
<dbReference type="PANTHER" id="PTHR32315:SF3">
    <property type="entry name" value="ADENINE PHOSPHORIBOSYLTRANSFERASE"/>
    <property type="match status" value="1"/>
</dbReference>
<dbReference type="Pfam" id="PF00156">
    <property type="entry name" value="Pribosyltran"/>
    <property type="match status" value="1"/>
</dbReference>
<dbReference type="SUPFAM" id="SSF53271">
    <property type="entry name" value="PRTase-like"/>
    <property type="match status" value="1"/>
</dbReference>
<dbReference type="PROSITE" id="PS00103">
    <property type="entry name" value="PUR_PYR_PR_TRANSFER"/>
    <property type="match status" value="1"/>
</dbReference>
<sequence>MAQSDITIDALSKVGQQDAEYLVSLVRSVPGFPKEGIIFRDFMPVLADPKGLKILLKALEEALPVSPSEFDSIAGLESRGFLFGPAMAAHLGKGFIAVRKAGKLPPETIGESYDLEYGTASVEIETDAVQAGKRVLIVDDLIATGGTAKAATDLIEKAGGTVVGFSFVMRLDGLDGLDKLDGKPSSSLIAMPA</sequence>
<reference key="1">
    <citation type="journal article" date="2008" name="BMC Genomics">
        <title>Comparative genomic analysis of the gut bacterium Bifidobacterium longum reveals loci susceptible to deletion during pure culture growth.</title>
        <authorList>
            <person name="Lee J.H."/>
            <person name="Karamychev V.N."/>
            <person name="Kozyavkin S.A."/>
            <person name="Mills D."/>
            <person name="Pavlov A.R."/>
            <person name="Pavlova N.V."/>
            <person name="Polouchine N.N."/>
            <person name="Richardson P.M."/>
            <person name="Shakhova V.V."/>
            <person name="Slesarev A.I."/>
            <person name="Weimer B."/>
            <person name="O'Sullivan D.J."/>
        </authorList>
    </citation>
    <scope>NUCLEOTIDE SEQUENCE [LARGE SCALE GENOMIC DNA]</scope>
    <source>
        <strain>DJO10A</strain>
    </source>
</reference>
<name>APT_BIFLD</name>
<comment type="function">
    <text evidence="1">Catalyzes a salvage reaction resulting in the formation of AMP, that is energically less costly than de novo synthesis.</text>
</comment>
<comment type="catalytic activity">
    <reaction evidence="1">
        <text>AMP + diphosphate = 5-phospho-alpha-D-ribose 1-diphosphate + adenine</text>
        <dbReference type="Rhea" id="RHEA:16609"/>
        <dbReference type="ChEBI" id="CHEBI:16708"/>
        <dbReference type="ChEBI" id="CHEBI:33019"/>
        <dbReference type="ChEBI" id="CHEBI:58017"/>
        <dbReference type="ChEBI" id="CHEBI:456215"/>
        <dbReference type="EC" id="2.4.2.7"/>
    </reaction>
</comment>
<comment type="pathway">
    <text evidence="1">Purine metabolism; AMP biosynthesis via salvage pathway; AMP from adenine: step 1/1.</text>
</comment>
<comment type="subunit">
    <text evidence="1">Homodimer.</text>
</comment>
<comment type="subcellular location">
    <subcellularLocation>
        <location evidence="1">Cytoplasm</location>
    </subcellularLocation>
</comment>
<comment type="similarity">
    <text evidence="1">Belongs to the purine/pyrimidine phosphoribosyltransferase family.</text>
</comment>
<proteinExistence type="inferred from homology"/>
<evidence type="ECO:0000255" key="1">
    <source>
        <dbReference type="HAMAP-Rule" id="MF_00004"/>
    </source>
</evidence>
<gene>
    <name evidence="1" type="primary">apt</name>
    <name type="ordered locus">BLD_0455</name>
</gene>
<feature type="chain" id="PRO_1000088954" description="Adenine phosphoribosyltransferase">
    <location>
        <begin position="1"/>
        <end position="193"/>
    </location>
</feature>
<protein>
    <recommendedName>
        <fullName evidence="1">Adenine phosphoribosyltransferase</fullName>
        <shortName evidence="1">APRT</shortName>
        <ecNumber evidence="1">2.4.2.7</ecNumber>
    </recommendedName>
</protein>
<organism>
    <name type="scientific">Bifidobacterium longum (strain DJO10A)</name>
    <dbReference type="NCBI Taxonomy" id="205913"/>
    <lineage>
        <taxon>Bacteria</taxon>
        <taxon>Bacillati</taxon>
        <taxon>Actinomycetota</taxon>
        <taxon>Actinomycetes</taxon>
        <taxon>Bifidobacteriales</taxon>
        <taxon>Bifidobacteriaceae</taxon>
        <taxon>Bifidobacterium</taxon>
    </lineage>
</organism>